<feature type="signal peptide" evidence="3">
    <location>
        <begin position="1"/>
        <end position="19"/>
    </location>
</feature>
<feature type="chain" id="PRO_0000275880" description="Probable quinol oxidase subunit 2">
    <location>
        <begin position="20"/>
        <end position="374"/>
    </location>
</feature>
<feature type="transmembrane region" description="Helical" evidence="2">
    <location>
        <begin position="43"/>
        <end position="63"/>
    </location>
</feature>
<feature type="transmembrane region" description="Helical" evidence="2">
    <location>
        <begin position="82"/>
        <end position="102"/>
    </location>
</feature>
<feature type="region of interest" description="Disordered" evidence="4">
    <location>
        <begin position="317"/>
        <end position="374"/>
    </location>
</feature>
<feature type="compositionally biased region" description="Basic and acidic residues" evidence="4">
    <location>
        <begin position="330"/>
        <end position="374"/>
    </location>
</feature>
<feature type="lipid moiety-binding region" description="N-palmitoyl cysteine" evidence="3">
    <location>
        <position position="20"/>
    </location>
</feature>
<feature type="lipid moiety-binding region" description="S-diacylglycerol cysteine" evidence="3">
    <location>
        <position position="20"/>
    </location>
</feature>
<proteinExistence type="inferred from homology"/>
<organism>
    <name type="scientific">Staphylococcus epidermidis (strain ATCC 12228 / FDA PCI 1200)</name>
    <dbReference type="NCBI Taxonomy" id="176280"/>
    <lineage>
        <taxon>Bacteria</taxon>
        <taxon>Bacillati</taxon>
        <taxon>Bacillota</taxon>
        <taxon>Bacilli</taxon>
        <taxon>Bacillales</taxon>
        <taxon>Staphylococcaceae</taxon>
        <taxon>Staphylococcus</taxon>
    </lineage>
</organism>
<dbReference type="EC" id="1.10.3.-"/>
<dbReference type="EMBL" id="AE015929">
    <property type="protein sequence ID" value="AAO04356.1"/>
    <property type="molecule type" value="Genomic_DNA"/>
</dbReference>
<dbReference type="RefSeq" id="NP_764314.1">
    <property type="nucleotide sequence ID" value="NC_004461.1"/>
</dbReference>
<dbReference type="RefSeq" id="WP_001831736.1">
    <property type="nucleotide sequence ID" value="NZ_WBME01000028.1"/>
</dbReference>
<dbReference type="SMR" id="Q8CPP6"/>
<dbReference type="GeneID" id="50019101"/>
<dbReference type="KEGG" id="sep:SE_0759"/>
<dbReference type="PATRIC" id="fig|176280.10.peg.731"/>
<dbReference type="eggNOG" id="COG1622">
    <property type="taxonomic scope" value="Bacteria"/>
</dbReference>
<dbReference type="HOGENOM" id="CLU_036876_6_0_9"/>
<dbReference type="OrthoDB" id="9781261at2"/>
<dbReference type="Proteomes" id="UP000001411">
    <property type="component" value="Chromosome"/>
</dbReference>
<dbReference type="GO" id="GO:0005886">
    <property type="term" value="C:plasma membrane"/>
    <property type="evidence" value="ECO:0007669"/>
    <property type="project" value="UniProtKB-SubCell"/>
</dbReference>
<dbReference type="GO" id="GO:0005507">
    <property type="term" value="F:copper ion binding"/>
    <property type="evidence" value="ECO:0007669"/>
    <property type="project" value="InterPro"/>
</dbReference>
<dbReference type="GO" id="GO:0009486">
    <property type="term" value="F:cytochrome bo3 ubiquinol oxidase activity"/>
    <property type="evidence" value="ECO:0007669"/>
    <property type="project" value="InterPro"/>
</dbReference>
<dbReference type="GO" id="GO:0004129">
    <property type="term" value="F:cytochrome-c oxidase activity"/>
    <property type="evidence" value="ECO:0007669"/>
    <property type="project" value="InterPro"/>
</dbReference>
<dbReference type="GO" id="GO:0016682">
    <property type="term" value="F:oxidoreductase activity, acting on diphenols and related substances as donors, oxygen as acceptor"/>
    <property type="evidence" value="ECO:0007669"/>
    <property type="project" value="InterPro"/>
</dbReference>
<dbReference type="GO" id="GO:0042773">
    <property type="term" value="P:ATP synthesis coupled electron transport"/>
    <property type="evidence" value="ECO:0007669"/>
    <property type="project" value="TreeGrafter"/>
</dbReference>
<dbReference type="CDD" id="cd04212">
    <property type="entry name" value="CuRO_UO_II"/>
    <property type="match status" value="1"/>
</dbReference>
<dbReference type="Gene3D" id="1.10.287.90">
    <property type="match status" value="1"/>
</dbReference>
<dbReference type="Gene3D" id="2.60.40.420">
    <property type="entry name" value="Cupredoxins - blue copper proteins"/>
    <property type="match status" value="1"/>
</dbReference>
<dbReference type="InterPro" id="IPR045187">
    <property type="entry name" value="CcO_II"/>
</dbReference>
<dbReference type="InterPro" id="IPR002429">
    <property type="entry name" value="CcO_II-like_C"/>
</dbReference>
<dbReference type="InterPro" id="IPR008972">
    <property type="entry name" value="Cupredoxin"/>
</dbReference>
<dbReference type="InterPro" id="IPR034227">
    <property type="entry name" value="CuRO_UO_II"/>
</dbReference>
<dbReference type="InterPro" id="IPR011759">
    <property type="entry name" value="Cyt_c_oxidase_su2_TM_dom"/>
</dbReference>
<dbReference type="InterPro" id="IPR036257">
    <property type="entry name" value="Cyt_c_oxidase_su2_TM_sf"/>
</dbReference>
<dbReference type="InterPro" id="IPR006332">
    <property type="entry name" value="QoxA"/>
</dbReference>
<dbReference type="NCBIfam" id="TIGR01432">
    <property type="entry name" value="QOXA"/>
    <property type="match status" value="1"/>
</dbReference>
<dbReference type="PANTHER" id="PTHR22888:SF18">
    <property type="entry name" value="CYTOCHROME BO(3) UBIQUINOL OXIDASE SUBUNIT 2"/>
    <property type="match status" value="1"/>
</dbReference>
<dbReference type="PANTHER" id="PTHR22888">
    <property type="entry name" value="CYTOCHROME C OXIDASE, SUBUNIT II"/>
    <property type="match status" value="1"/>
</dbReference>
<dbReference type="Pfam" id="PF02790">
    <property type="entry name" value="COX2_TM"/>
    <property type="match status" value="1"/>
</dbReference>
<dbReference type="SUPFAM" id="SSF49503">
    <property type="entry name" value="Cupredoxins"/>
    <property type="match status" value="1"/>
</dbReference>
<dbReference type="SUPFAM" id="SSF81464">
    <property type="entry name" value="Cytochrome c oxidase subunit II-like, transmembrane region"/>
    <property type="match status" value="1"/>
</dbReference>
<dbReference type="PROSITE" id="PS50857">
    <property type="entry name" value="COX2_CUA"/>
    <property type="match status" value="1"/>
</dbReference>
<dbReference type="PROSITE" id="PS50999">
    <property type="entry name" value="COX2_TM"/>
    <property type="match status" value="1"/>
</dbReference>
<dbReference type="PROSITE" id="PS51257">
    <property type="entry name" value="PROKAR_LIPOPROTEIN"/>
    <property type="match status" value="1"/>
</dbReference>
<keyword id="KW-1003">Cell membrane</keyword>
<keyword id="KW-0249">Electron transport</keyword>
<keyword id="KW-0449">Lipoprotein</keyword>
<keyword id="KW-0472">Membrane</keyword>
<keyword id="KW-0560">Oxidoreductase</keyword>
<keyword id="KW-0564">Palmitate</keyword>
<keyword id="KW-0679">Respiratory chain</keyword>
<keyword id="KW-0732">Signal</keyword>
<keyword id="KW-0812">Transmembrane</keyword>
<keyword id="KW-1133">Transmembrane helix</keyword>
<keyword id="KW-0813">Transport</keyword>
<reference key="1">
    <citation type="journal article" date="2003" name="Mol. Microbiol.">
        <title>Genome-based analysis of virulence genes in a non-biofilm-forming Staphylococcus epidermidis strain (ATCC 12228).</title>
        <authorList>
            <person name="Zhang Y.-Q."/>
            <person name="Ren S.-X."/>
            <person name="Li H.-L."/>
            <person name="Wang Y.-X."/>
            <person name="Fu G."/>
            <person name="Yang J."/>
            <person name="Qin Z.-Q."/>
            <person name="Miao Y.-G."/>
            <person name="Wang W.-Y."/>
            <person name="Chen R.-S."/>
            <person name="Shen Y."/>
            <person name="Chen Z."/>
            <person name="Yuan Z.-H."/>
            <person name="Zhao G.-P."/>
            <person name="Qu D."/>
            <person name="Danchin A."/>
            <person name="Wen Y.-M."/>
        </authorList>
    </citation>
    <scope>NUCLEOTIDE SEQUENCE [LARGE SCALE GENOMIC DNA]</scope>
    <source>
        <strain>ATCC 12228 / FDA PCI 1200</strain>
    </source>
</reference>
<protein>
    <recommendedName>
        <fullName>Probable quinol oxidase subunit 2</fullName>
        <ecNumber>1.10.3.-</ecNumber>
    </recommendedName>
    <alternativeName>
        <fullName>Quinol oxidase polypeptide II</fullName>
    </alternativeName>
</protein>
<gene>
    <name type="primary">qoxA</name>
    <name type="ordered locus">SE_0759</name>
</gene>
<sequence>MSKFKSLLLLFGTLILLSGCSNIEVFNAKGPVASSQKFLIIYSIIFMLVIVAVVLSMFAIFIFKYSYKKNSESGKMHHNSLIETIWFVVPILIVIALAIPTVKTLYDYEKPPEKDKDPLVVYAVSAGYKWFFAYPDQHIETVNTLTIPKDRPVVFKLQSMDTMTSFWIPQLGGQKYAMTGMTMNWTLTADQLGTFRGRNSNFNGEGFSRQTFKVHSVSQNDFDKWVKEAKGKKTLSQDTFDKQLLPSTSNKELTFSGTHMAFVDPAADPEYIFYAYKRYNFEQKDPNFTAEEDLYKDVKDKPIKPARKVHITNPNYERHGMKPMILGNNEKYDNEFKKEEDHNSKEMEKISKGAKDENASKLHKKEHDDHGGGH</sequence>
<evidence type="ECO:0000250" key="1"/>
<evidence type="ECO:0000255" key="2"/>
<evidence type="ECO:0000255" key="3">
    <source>
        <dbReference type="PROSITE-ProRule" id="PRU00303"/>
    </source>
</evidence>
<evidence type="ECO:0000256" key="4">
    <source>
        <dbReference type="SAM" id="MobiDB-lite"/>
    </source>
</evidence>
<evidence type="ECO:0000305" key="5"/>
<name>QOX2_STAES</name>
<comment type="function">
    <text evidence="1">Catalyzes quinol oxidation with the concomitant reduction of oxygen to water. Subunit II transfers the electrons from a quinol to the binuclear center of the catalytic subunit I (By similarity).</text>
</comment>
<comment type="catalytic activity">
    <reaction>
        <text>2 a quinol + O2 = 2 a quinone + 2 H2O</text>
        <dbReference type="Rhea" id="RHEA:55376"/>
        <dbReference type="ChEBI" id="CHEBI:15377"/>
        <dbReference type="ChEBI" id="CHEBI:15379"/>
        <dbReference type="ChEBI" id="CHEBI:24646"/>
        <dbReference type="ChEBI" id="CHEBI:132124"/>
    </reaction>
</comment>
<comment type="subcellular location">
    <subcellularLocation>
        <location evidence="3">Cell membrane</location>
        <topology evidence="1">Multi-pass membrane protein</topology>
    </subcellularLocation>
</comment>
<comment type="similarity">
    <text evidence="5">Belongs to the cytochrome c oxidase subunit 2 family.</text>
</comment>
<accession>Q8CPP6</accession>